<sequence length="84" mass="9549">MSETNRIQQGRVISDKMDKSIVVAIERTVKHPIYGKFIKRTTKVHAHDEDNTCGLGDKVEIAECRPLSKTKSWTLVKVLEKAKI</sequence>
<name>RS17_VIBA3</name>
<evidence type="ECO:0000255" key="1">
    <source>
        <dbReference type="HAMAP-Rule" id="MF_01345"/>
    </source>
</evidence>
<evidence type="ECO:0000305" key="2"/>
<organism>
    <name type="scientific">Vibrio atlanticus (strain LGP32)</name>
    <name type="common">Vibrio splendidus (strain Mel32)</name>
    <dbReference type="NCBI Taxonomy" id="575788"/>
    <lineage>
        <taxon>Bacteria</taxon>
        <taxon>Pseudomonadati</taxon>
        <taxon>Pseudomonadota</taxon>
        <taxon>Gammaproteobacteria</taxon>
        <taxon>Vibrionales</taxon>
        <taxon>Vibrionaceae</taxon>
        <taxon>Vibrio</taxon>
    </lineage>
</organism>
<protein>
    <recommendedName>
        <fullName evidence="1">Small ribosomal subunit protein uS17</fullName>
    </recommendedName>
    <alternativeName>
        <fullName evidence="2">30S ribosomal protein S17</fullName>
    </alternativeName>
</protein>
<dbReference type="EMBL" id="FM954972">
    <property type="protein sequence ID" value="CAV20115.1"/>
    <property type="molecule type" value="Genomic_DNA"/>
</dbReference>
<dbReference type="SMR" id="B7VLE8"/>
<dbReference type="STRING" id="575788.VS_2822"/>
<dbReference type="KEGG" id="vsp:VS_2822"/>
<dbReference type="PATRIC" id="fig|575788.5.peg.4034"/>
<dbReference type="eggNOG" id="COG0186">
    <property type="taxonomic scope" value="Bacteria"/>
</dbReference>
<dbReference type="HOGENOM" id="CLU_073626_1_1_6"/>
<dbReference type="Proteomes" id="UP000009100">
    <property type="component" value="Chromosome 1"/>
</dbReference>
<dbReference type="GO" id="GO:0022627">
    <property type="term" value="C:cytosolic small ribosomal subunit"/>
    <property type="evidence" value="ECO:0007669"/>
    <property type="project" value="TreeGrafter"/>
</dbReference>
<dbReference type="GO" id="GO:0019843">
    <property type="term" value="F:rRNA binding"/>
    <property type="evidence" value="ECO:0007669"/>
    <property type="project" value="UniProtKB-UniRule"/>
</dbReference>
<dbReference type="GO" id="GO:0003735">
    <property type="term" value="F:structural constituent of ribosome"/>
    <property type="evidence" value="ECO:0007669"/>
    <property type="project" value="InterPro"/>
</dbReference>
<dbReference type="GO" id="GO:0006412">
    <property type="term" value="P:translation"/>
    <property type="evidence" value="ECO:0007669"/>
    <property type="project" value="UniProtKB-UniRule"/>
</dbReference>
<dbReference type="CDD" id="cd00364">
    <property type="entry name" value="Ribosomal_uS17"/>
    <property type="match status" value="1"/>
</dbReference>
<dbReference type="FunFam" id="2.40.50.140:FF:000014">
    <property type="entry name" value="30S ribosomal protein S17"/>
    <property type="match status" value="1"/>
</dbReference>
<dbReference type="Gene3D" id="2.40.50.140">
    <property type="entry name" value="Nucleic acid-binding proteins"/>
    <property type="match status" value="1"/>
</dbReference>
<dbReference type="HAMAP" id="MF_01345_B">
    <property type="entry name" value="Ribosomal_uS17_B"/>
    <property type="match status" value="1"/>
</dbReference>
<dbReference type="InterPro" id="IPR012340">
    <property type="entry name" value="NA-bd_OB-fold"/>
</dbReference>
<dbReference type="InterPro" id="IPR000266">
    <property type="entry name" value="Ribosomal_uS17"/>
</dbReference>
<dbReference type="InterPro" id="IPR019984">
    <property type="entry name" value="Ribosomal_uS17_bact/chlr"/>
</dbReference>
<dbReference type="InterPro" id="IPR019979">
    <property type="entry name" value="Ribosomal_uS17_CS"/>
</dbReference>
<dbReference type="NCBIfam" id="NF004123">
    <property type="entry name" value="PRK05610.1"/>
    <property type="match status" value="1"/>
</dbReference>
<dbReference type="NCBIfam" id="TIGR03635">
    <property type="entry name" value="uS17_bact"/>
    <property type="match status" value="1"/>
</dbReference>
<dbReference type="PANTHER" id="PTHR10744">
    <property type="entry name" value="40S RIBOSOMAL PROTEIN S11 FAMILY MEMBER"/>
    <property type="match status" value="1"/>
</dbReference>
<dbReference type="PANTHER" id="PTHR10744:SF1">
    <property type="entry name" value="SMALL RIBOSOMAL SUBUNIT PROTEIN US17M"/>
    <property type="match status" value="1"/>
</dbReference>
<dbReference type="Pfam" id="PF00366">
    <property type="entry name" value="Ribosomal_S17"/>
    <property type="match status" value="1"/>
</dbReference>
<dbReference type="PRINTS" id="PR00973">
    <property type="entry name" value="RIBOSOMALS17"/>
</dbReference>
<dbReference type="SUPFAM" id="SSF50249">
    <property type="entry name" value="Nucleic acid-binding proteins"/>
    <property type="match status" value="1"/>
</dbReference>
<dbReference type="PROSITE" id="PS00056">
    <property type="entry name" value="RIBOSOMAL_S17"/>
    <property type="match status" value="1"/>
</dbReference>
<reference key="1">
    <citation type="submission" date="2009-02" db="EMBL/GenBank/DDBJ databases">
        <title>Vibrio splendidus str. LGP32 complete genome.</title>
        <authorList>
            <person name="Mazel D."/>
            <person name="Le Roux F."/>
        </authorList>
    </citation>
    <scope>NUCLEOTIDE SEQUENCE [LARGE SCALE GENOMIC DNA]</scope>
    <source>
        <strain>LGP32</strain>
    </source>
</reference>
<comment type="function">
    <text evidence="1">One of the primary rRNA binding proteins, it binds specifically to the 5'-end of 16S ribosomal RNA.</text>
</comment>
<comment type="subunit">
    <text evidence="1">Part of the 30S ribosomal subunit.</text>
</comment>
<comment type="similarity">
    <text evidence="1">Belongs to the universal ribosomal protein uS17 family.</text>
</comment>
<gene>
    <name evidence="1" type="primary">rpsQ</name>
    <name type="ordered locus">VS_2822</name>
</gene>
<feature type="chain" id="PRO_1000166507" description="Small ribosomal subunit protein uS17">
    <location>
        <begin position="1"/>
        <end position="84"/>
    </location>
</feature>
<keyword id="KW-0687">Ribonucleoprotein</keyword>
<keyword id="KW-0689">Ribosomal protein</keyword>
<keyword id="KW-0694">RNA-binding</keyword>
<keyword id="KW-0699">rRNA-binding</keyword>
<accession>B7VLE8</accession>
<proteinExistence type="inferred from homology"/>